<sequence length="236" mass="25132">MTTPANTTQAVGSTTSTTTTTAGATPANSGLFTIPDGDFFSTAKVVVASNAVATNEDLTKIQKIWKDMKIPSDTMAQAAWDLVRHCADVGSSAQTEMIGTGPYSNGVSRARLAAAIKEVCKLRQFCRKYAPVVWNWMLTNNSPPANWQAQGFKPEHKFAAFDFFDGVTNPAAITPKEGLIRPPFEAEMNAAQTATFVKITKARAQSNDFASLDAAVTRGRITGTTAAEAVISLPPP</sequence>
<protein>
    <recommendedName>
        <fullName>Coat protein</fullName>
    </recommendedName>
    <alternativeName>
        <fullName>Capsid protein</fullName>
        <shortName>CP</shortName>
    </alternativeName>
</protein>
<comment type="function">
    <text>Required for genome encapsidation. Forms ribonucleoprotein complexes along with TGB1 helicase and viral RNA.</text>
</comment>
<comment type="subcellular location">
    <subcellularLocation>
        <location evidence="2">Virion</location>
    </subcellularLocation>
</comment>
<comment type="similarity">
    <text evidence="2">Belongs to the potexvirus capsid protein family.</text>
</comment>
<proteinExistence type="inferred from homology"/>
<organismHost>
    <name type="scientific">Brassica campestris</name>
    <name type="common">Field mustard</name>
    <dbReference type="NCBI Taxonomy" id="3711"/>
</organismHost>
<organismHost>
    <name type="scientific">Solanum tuberosum</name>
    <name type="common">Potato</name>
    <dbReference type="NCBI Taxonomy" id="4113"/>
</organismHost>
<keyword id="KW-0167">Capsid protein</keyword>
<keyword id="KW-1139">Helical capsid protein</keyword>
<keyword id="KW-0687">Ribonucleoprotein</keyword>
<keyword id="KW-0946">Virion</keyword>
<reference key="1">
    <citation type="journal article" date="1993" name="J. Gen. Virol.">
        <title>RNA sequence of potato virus X strain HB.</title>
        <authorList>
            <person name="Querci M."/>
            <person name="van der Vlugt R."/>
            <person name="Goldbach R."/>
            <person name="Salazar L.F."/>
        </authorList>
    </citation>
    <scope>NUCLEOTIDE SEQUENCE [GENOMIC RNA]</scope>
</reference>
<reference key="2">
    <citation type="journal article" date="2005" name="Mol. Plant Microbe Interact.">
        <title>A new cell-to-cell transport model for Potexviruses.</title>
        <authorList>
            <person name="Verchot-Lubicz J."/>
        </authorList>
    </citation>
    <scope>REVIEW</scope>
</reference>
<evidence type="ECO:0000256" key="1">
    <source>
        <dbReference type="SAM" id="MobiDB-lite"/>
    </source>
</evidence>
<evidence type="ECO:0000305" key="2"/>
<accession>Q07626</accession>
<organism>
    <name type="scientific">Potato virus X (strain HB)</name>
    <name type="common">PVX</name>
    <dbReference type="NCBI Taxonomy" id="73488"/>
    <lineage>
        <taxon>Viruses</taxon>
        <taxon>Riboviria</taxon>
        <taxon>Orthornavirae</taxon>
        <taxon>Kitrinoviricota</taxon>
        <taxon>Alsuviricetes</taxon>
        <taxon>Tymovirales</taxon>
        <taxon>Alphaflexiviridae</taxon>
        <taxon>Potexvirus</taxon>
        <taxon>Potato virus X</taxon>
    </lineage>
</organism>
<dbReference type="EMBL" id="X72214">
    <property type="protein sequence ID" value="CAA51016.1"/>
    <property type="molecule type" value="Genomic_RNA"/>
</dbReference>
<dbReference type="PIR" id="S35766">
    <property type="entry name" value="S35766"/>
</dbReference>
<dbReference type="SMR" id="Q07626"/>
<dbReference type="Proteomes" id="UP000006842">
    <property type="component" value="Genome"/>
</dbReference>
<dbReference type="GO" id="GO:0019029">
    <property type="term" value="C:helical viral capsid"/>
    <property type="evidence" value="ECO:0007669"/>
    <property type="project" value="UniProtKB-KW"/>
</dbReference>
<dbReference type="GO" id="GO:1990904">
    <property type="term" value="C:ribonucleoprotein complex"/>
    <property type="evidence" value="ECO:0007669"/>
    <property type="project" value="UniProtKB-KW"/>
</dbReference>
<dbReference type="GO" id="GO:0005198">
    <property type="term" value="F:structural molecule activity"/>
    <property type="evidence" value="ECO:0007669"/>
    <property type="project" value="InterPro"/>
</dbReference>
<dbReference type="InterPro" id="IPR000052">
    <property type="entry name" value="Pltvir_coat"/>
</dbReference>
<dbReference type="Pfam" id="PF00286">
    <property type="entry name" value="Flexi_CP"/>
    <property type="match status" value="1"/>
</dbReference>
<dbReference type="PRINTS" id="PR00232">
    <property type="entry name" value="POTXCARLCOAT"/>
</dbReference>
<dbReference type="PROSITE" id="PS00418">
    <property type="entry name" value="POTEX_CARLAVIRUS_COAT"/>
    <property type="match status" value="1"/>
</dbReference>
<feature type="chain" id="PRO_0000222626" description="Coat protein">
    <location>
        <begin position="1"/>
        <end position="236"/>
    </location>
</feature>
<feature type="region of interest" description="Disordered" evidence="1">
    <location>
        <begin position="1"/>
        <end position="27"/>
    </location>
</feature>
<feature type="compositionally biased region" description="Low complexity" evidence="1">
    <location>
        <begin position="7"/>
        <end position="27"/>
    </location>
</feature>
<name>CAPSD_PVXHB</name>